<name>UBN2_HUMAN</name>
<reference key="1">
    <citation type="journal article" date="2003" name="Nature">
        <title>The DNA sequence of human chromosome 7.</title>
        <authorList>
            <person name="Hillier L.W."/>
            <person name="Fulton R.S."/>
            <person name="Fulton L.A."/>
            <person name="Graves T.A."/>
            <person name="Pepin K.H."/>
            <person name="Wagner-McPherson C."/>
            <person name="Layman D."/>
            <person name="Maas J."/>
            <person name="Jaeger S."/>
            <person name="Walker R."/>
            <person name="Wylie K."/>
            <person name="Sekhon M."/>
            <person name="Becker M.C."/>
            <person name="O'Laughlin M.D."/>
            <person name="Schaller M.E."/>
            <person name="Fewell G.A."/>
            <person name="Delehaunty K.D."/>
            <person name="Miner T.L."/>
            <person name="Nash W.E."/>
            <person name="Cordes M."/>
            <person name="Du H."/>
            <person name="Sun H."/>
            <person name="Edwards J."/>
            <person name="Bradshaw-Cordum H."/>
            <person name="Ali J."/>
            <person name="Andrews S."/>
            <person name="Isak A."/>
            <person name="Vanbrunt A."/>
            <person name="Nguyen C."/>
            <person name="Du F."/>
            <person name="Lamar B."/>
            <person name="Courtney L."/>
            <person name="Kalicki J."/>
            <person name="Ozersky P."/>
            <person name="Bielicki L."/>
            <person name="Scott K."/>
            <person name="Holmes A."/>
            <person name="Harkins R."/>
            <person name="Harris A."/>
            <person name="Strong C.M."/>
            <person name="Hou S."/>
            <person name="Tomlinson C."/>
            <person name="Dauphin-Kohlberg S."/>
            <person name="Kozlowicz-Reilly A."/>
            <person name="Leonard S."/>
            <person name="Rohlfing T."/>
            <person name="Rock S.M."/>
            <person name="Tin-Wollam A.-M."/>
            <person name="Abbott A."/>
            <person name="Minx P."/>
            <person name="Maupin R."/>
            <person name="Strowmatt C."/>
            <person name="Latreille P."/>
            <person name="Miller N."/>
            <person name="Johnson D."/>
            <person name="Murray J."/>
            <person name="Woessner J.P."/>
            <person name="Wendl M.C."/>
            <person name="Yang S.-P."/>
            <person name="Schultz B.R."/>
            <person name="Wallis J.W."/>
            <person name="Spieth J."/>
            <person name="Bieri T.A."/>
            <person name="Nelson J.O."/>
            <person name="Berkowicz N."/>
            <person name="Wohldmann P.E."/>
            <person name="Cook L.L."/>
            <person name="Hickenbotham M.T."/>
            <person name="Eldred J."/>
            <person name="Williams D."/>
            <person name="Bedell J.A."/>
            <person name="Mardis E.R."/>
            <person name="Clifton S.W."/>
            <person name="Chissoe S.L."/>
            <person name="Marra M.A."/>
            <person name="Raymond C."/>
            <person name="Haugen E."/>
            <person name="Gillett W."/>
            <person name="Zhou Y."/>
            <person name="James R."/>
            <person name="Phelps K."/>
            <person name="Iadanoto S."/>
            <person name="Bubb K."/>
            <person name="Simms E."/>
            <person name="Levy R."/>
            <person name="Clendenning J."/>
            <person name="Kaul R."/>
            <person name="Kent W.J."/>
            <person name="Furey T.S."/>
            <person name="Baertsch R.A."/>
            <person name="Brent M.R."/>
            <person name="Keibler E."/>
            <person name="Flicek P."/>
            <person name="Bork P."/>
            <person name="Suyama M."/>
            <person name="Bailey J.A."/>
            <person name="Portnoy M.E."/>
            <person name="Torrents D."/>
            <person name="Chinwalla A.T."/>
            <person name="Gish W.R."/>
            <person name="Eddy S.R."/>
            <person name="McPherson J.D."/>
            <person name="Olson M.V."/>
            <person name="Eichler E.E."/>
            <person name="Green E.D."/>
            <person name="Waterston R.H."/>
            <person name="Wilson R.K."/>
        </authorList>
    </citation>
    <scope>NUCLEOTIDE SEQUENCE [LARGE SCALE GENOMIC DNA]</scope>
</reference>
<reference key="2">
    <citation type="journal article" date="2003" name="Science">
        <title>Human chromosome 7: DNA sequence and biology.</title>
        <authorList>
            <person name="Scherer S.W."/>
            <person name="Cheung J."/>
            <person name="MacDonald J.R."/>
            <person name="Osborne L.R."/>
            <person name="Nakabayashi K."/>
            <person name="Herbrick J.-A."/>
            <person name="Carson A.R."/>
            <person name="Parker-Katiraee L."/>
            <person name="Skaug J."/>
            <person name="Khaja R."/>
            <person name="Zhang J."/>
            <person name="Hudek A.K."/>
            <person name="Li M."/>
            <person name="Haddad M."/>
            <person name="Duggan G.E."/>
            <person name="Fernandez B.A."/>
            <person name="Kanematsu E."/>
            <person name="Gentles S."/>
            <person name="Christopoulos C.C."/>
            <person name="Choufani S."/>
            <person name="Kwasnicka D."/>
            <person name="Zheng X.H."/>
            <person name="Lai Z."/>
            <person name="Nusskern D.R."/>
            <person name="Zhang Q."/>
            <person name="Gu Z."/>
            <person name="Lu F."/>
            <person name="Zeesman S."/>
            <person name="Nowaczyk M.J."/>
            <person name="Teshima I."/>
            <person name="Chitayat D."/>
            <person name="Shuman C."/>
            <person name="Weksberg R."/>
            <person name="Zackai E.H."/>
            <person name="Grebe T.A."/>
            <person name="Cox S.R."/>
            <person name="Kirkpatrick S.J."/>
            <person name="Rahman N."/>
            <person name="Friedman J.M."/>
            <person name="Heng H.H.Q."/>
            <person name="Pelicci P.G."/>
            <person name="Lo-Coco F."/>
            <person name="Belloni E."/>
            <person name="Shaffer L.G."/>
            <person name="Pober B."/>
            <person name="Morton C.C."/>
            <person name="Gusella J.F."/>
            <person name="Bruns G.A.P."/>
            <person name="Korf B.R."/>
            <person name="Quade B.J."/>
            <person name="Ligon A.H."/>
            <person name="Ferguson H."/>
            <person name="Higgins A.W."/>
            <person name="Leach N.T."/>
            <person name="Herrick S.R."/>
            <person name="Lemyre E."/>
            <person name="Farra C.G."/>
            <person name="Kim H.-G."/>
            <person name="Summers A.M."/>
            <person name="Gripp K.W."/>
            <person name="Roberts W."/>
            <person name="Szatmari P."/>
            <person name="Winsor E.J.T."/>
            <person name="Grzeschik K.-H."/>
            <person name="Teebi A."/>
            <person name="Minassian B.A."/>
            <person name="Kere J."/>
            <person name="Armengol L."/>
            <person name="Pujana M.A."/>
            <person name="Estivill X."/>
            <person name="Wilson M.D."/>
            <person name="Koop B.F."/>
            <person name="Tosi S."/>
            <person name="Moore G.E."/>
            <person name="Boright A.P."/>
            <person name="Zlotorynski E."/>
            <person name="Kerem B."/>
            <person name="Kroisel P.M."/>
            <person name="Petek E."/>
            <person name="Oscier D.G."/>
            <person name="Mould S.J."/>
            <person name="Doehner H."/>
            <person name="Doehner K."/>
            <person name="Rommens J.M."/>
            <person name="Vincent J.B."/>
            <person name="Venter J.C."/>
            <person name="Li P.W."/>
            <person name="Mural R.J."/>
            <person name="Adams M.D."/>
            <person name="Tsui L.-C."/>
        </authorList>
    </citation>
    <scope>NUCLEOTIDE SEQUENCE [LARGE SCALE GENOMIC DNA]</scope>
</reference>
<reference key="3">
    <citation type="journal article" date="2004" name="Nat. Genet.">
        <title>Complete sequencing and characterization of 21,243 full-length human cDNAs.</title>
        <authorList>
            <person name="Ota T."/>
            <person name="Suzuki Y."/>
            <person name="Nishikawa T."/>
            <person name="Otsuki T."/>
            <person name="Sugiyama T."/>
            <person name="Irie R."/>
            <person name="Wakamatsu A."/>
            <person name="Hayashi K."/>
            <person name="Sato H."/>
            <person name="Nagai K."/>
            <person name="Kimura K."/>
            <person name="Makita H."/>
            <person name="Sekine M."/>
            <person name="Obayashi M."/>
            <person name="Nishi T."/>
            <person name="Shibahara T."/>
            <person name="Tanaka T."/>
            <person name="Ishii S."/>
            <person name="Yamamoto J."/>
            <person name="Saito K."/>
            <person name="Kawai Y."/>
            <person name="Isono Y."/>
            <person name="Nakamura Y."/>
            <person name="Nagahari K."/>
            <person name="Murakami K."/>
            <person name="Yasuda T."/>
            <person name="Iwayanagi T."/>
            <person name="Wagatsuma M."/>
            <person name="Shiratori A."/>
            <person name="Sudo H."/>
            <person name="Hosoiri T."/>
            <person name="Kaku Y."/>
            <person name="Kodaira H."/>
            <person name="Kondo H."/>
            <person name="Sugawara M."/>
            <person name="Takahashi M."/>
            <person name="Kanda K."/>
            <person name="Yokoi T."/>
            <person name="Furuya T."/>
            <person name="Kikkawa E."/>
            <person name="Omura Y."/>
            <person name="Abe K."/>
            <person name="Kamihara K."/>
            <person name="Katsuta N."/>
            <person name="Sato K."/>
            <person name="Tanikawa M."/>
            <person name="Yamazaki M."/>
            <person name="Ninomiya K."/>
            <person name="Ishibashi T."/>
            <person name="Yamashita H."/>
            <person name="Murakawa K."/>
            <person name="Fujimori K."/>
            <person name="Tanai H."/>
            <person name="Kimata M."/>
            <person name="Watanabe M."/>
            <person name="Hiraoka S."/>
            <person name="Chiba Y."/>
            <person name="Ishida S."/>
            <person name="Ono Y."/>
            <person name="Takiguchi S."/>
            <person name="Watanabe S."/>
            <person name="Yosida M."/>
            <person name="Hotuta T."/>
            <person name="Kusano J."/>
            <person name="Kanehori K."/>
            <person name="Takahashi-Fujii A."/>
            <person name="Hara H."/>
            <person name="Tanase T.-O."/>
            <person name="Nomura Y."/>
            <person name="Togiya S."/>
            <person name="Komai F."/>
            <person name="Hara R."/>
            <person name="Takeuchi K."/>
            <person name="Arita M."/>
            <person name="Imose N."/>
            <person name="Musashino K."/>
            <person name="Yuuki H."/>
            <person name="Oshima A."/>
            <person name="Sasaki N."/>
            <person name="Aotsuka S."/>
            <person name="Yoshikawa Y."/>
            <person name="Matsunawa H."/>
            <person name="Ichihara T."/>
            <person name="Shiohata N."/>
            <person name="Sano S."/>
            <person name="Moriya S."/>
            <person name="Momiyama H."/>
            <person name="Satoh N."/>
            <person name="Takami S."/>
            <person name="Terashima Y."/>
            <person name="Suzuki O."/>
            <person name="Nakagawa S."/>
            <person name="Senoh A."/>
            <person name="Mizoguchi H."/>
            <person name="Goto Y."/>
            <person name="Shimizu F."/>
            <person name="Wakebe H."/>
            <person name="Hishigaki H."/>
            <person name="Watanabe T."/>
            <person name="Sugiyama A."/>
            <person name="Takemoto M."/>
            <person name="Kawakami B."/>
            <person name="Yamazaki M."/>
            <person name="Watanabe K."/>
            <person name="Kumagai A."/>
            <person name="Itakura S."/>
            <person name="Fukuzumi Y."/>
            <person name="Fujimori Y."/>
            <person name="Komiyama M."/>
            <person name="Tashiro H."/>
            <person name="Tanigami A."/>
            <person name="Fujiwara T."/>
            <person name="Ono T."/>
            <person name="Yamada K."/>
            <person name="Fujii Y."/>
            <person name="Ozaki K."/>
            <person name="Hirao M."/>
            <person name="Ohmori Y."/>
            <person name="Kawabata A."/>
            <person name="Hikiji T."/>
            <person name="Kobatake N."/>
            <person name="Inagaki H."/>
            <person name="Ikema Y."/>
            <person name="Okamoto S."/>
            <person name="Okitani R."/>
            <person name="Kawakami T."/>
            <person name="Noguchi S."/>
            <person name="Itoh T."/>
            <person name="Shigeta K."/>
            <person name="Senba T."/>
            <person name="Matsumura K."/>
            <person name="Nakajima Y."/>
            <person name="Mizuno T."/>
            <person name="Morinaga M."/>
            <person name="Sasaki M."/>
            <person name="Togashi T."/>
            <person name="Oyama M."/>
            <person name="Hata H."/>
            <person name="Watanabe M."/>
            <person name="Komatsu T."/>
            <person name="Mizushima-Sugano J."/>
            <person name="Satoh T."/>
            <person name="Shirai Y."/>
            <person name="Takahashi Y."/>
            <person name="Nakagawa K."/>
            <person name="Okumura K."/>
            <person name="Nagase T."/>
            <person name="Nomura N."/>
            <person name="Kikuchi H."/>
            <person name="Masuho Y."/>
            <person name="Yamashita R."/>
            <person name="Nakai K."/>
            <person name="Yada T."/>
            <person name="Nakamura Y."/>
            <person name="Ohara O."/>
            <person name="Isogai T."/>
            <person name="Sugano S."/>
        </authorList>
    </citation>
    <scope>NUCLEOTIDE SEQUENCE [LARGE SCALE MRNA] OF 75-1347 (ISOFORM 1)</scope>
    <scope>NUCLEOTIDE SEQUENCE [LARGE SCALE MRNA] OF 478-1347 (ISOFORM 2)</scope>
    <source>
        <tissue>Testis</tissue>
    </source>
</reference>
<reference key="4">
    <citation type="journal article" date="2004" name="Genome Res.">
        <title>The status, quality, and expansion of the NIH full-length cDNA project: the Mammalian Gene Collection (MGC).</title>
        <authorList>
            <consortium name="The MGC Project Team"/>
        </authorList>
    </citation>
    <scope>NUCLEOTIDE SEQUENCE [LARGE SCALE MRNA] OF 233-1347 (ISOFORM 1)</scope>
    <source>
        <tissue>Eye</tissue>
        <tissue>Uterus</tissue>
    </source>
</reference>
<reference key="5">
    <citation type="submission" date="2002-11" db="EMBL/GenBank/DDBJ databases">
        <title>The nucleotide sequence of a long cDNA clone isolated from human.</title>
        <authorList>
            <person name="Nagase T."/>
            <person name="Kikuno R."/>
            <person name="Ohara O."/>
        </authorList>
    </citation>
    <scope>NUCLEOTIDE SEQUENCE [LARGE SCALE MRNA] OF 325-1347 (ISOFORM 1)</scope>
    <source>
        <tissue>Brain</tissue>
    </source>
</reference>
<reference key="6">
    <citation type="journal article" date="2007" name="Science">
        <title>ATM and ATR substrate analysis reveals extensive protein networks responsive to DNA damage.</title>
        <authorList>
            <person name="Matsuoka S."/>
            <person name="Ballif B.A."/>
            <person name="Smogorzewska A."/>
            <person name="McDonald E.R. III"/>
            <person name="Hurov K.E."/>
            <person name="Luo J."/>
            <person name="Bakalarski C.E."/>
            <person name="Zhao Z."/>
            <person name="Solimini N."/>
            <person name="Lerenthal Y."/>
            <person name="Shiloh Y."/>
            <person name="Gygi S.P."/>
            <person name="Elledge S.J."/>
        </authorList>
    </citation>
    <scope>IDENTIFICATION BY MASS SPECTROMETRY [LARGE SCALE ANALYSIS]</scope>
    <source>
        <tissue>Embryonic kidney</tissue>
    </source>
</reference>
<reference key="7">
    <citation type="journal article" date="2008" name="Proc. Natl. Acad. Sci. U.S.A.">
        <title>A quantitative atlas of mitotic phosphorylation.</title>
        <authorList>
            <person name="Dephoure N."/>
            <person name="Zhou C."/>
            <person name="Villen J."/>
            <person name="Beausoleil S.A."/>
            <person name="Bakalarski C.E."/>
            <person name="Elledge S.J."/>
            <person name="Gygi S.P."/>
        </authorList>
    </citation>
    <scope>PHOSPHORYLATION [LARGE SCALE ANALYSIS] AT SER-13</scope>
    <scope>IDENTIFICATION BY MASS SPECTROMETRY [LARGE SCALE ANALYSIS]</scope>
    <source>
        <tissue>Cervix carcinoma</tissue>
    </source>
</reference>
<reference key="8">
    <citation type="journal article" date="2009" name="Mol. Cell. Biol.">
        <title>Human UBN1 is an ortholog of yeast Hpc2p and has an essential role in the HIRA/ASF1a chromatin-remodeling pathway in senescent cells.</title>
        <authorList>
            <person name="Banumathy G."/>
            <person name="Somaiah N."/>
            <person name="Zhang R."/>
            <person name="Tang Y."/>
            <person name="Hoffmann J."/>
            <person name="Andrake M."/>
            <person name="Ceulemans H."/>
            <person name="Schultz D."/>
            <person name="Marmorstein R."/>
            <person name="Adams P.D."/>
        </authorList>
    </citation>
    <scope>NOMENCLATURE</scope>
    <scope>TISSUE SPECIFICITY</scope>
</reference>
<reference key="9">
    <citation type="journal article" date="2009" name="Science">
        <title>Lysine acetylation targets protein complexes and co-regulates major cellular functions.</title>
        <authorList>
            <person name="Choudhary C."/>
            <person name="Kumar C."/>
            <person name="Gnad F."/>
            <person name="Nielsen M.L."/>
            <person name="Rehman M."/>
            <person name="Walther T.C."/>
            <person name="Olsen J.V."/>
            <person name="Mann M."/>
        </authorList>
    </citation>
    <scope>ACETYLATION [LARGE SCALE ANALYSIS] AT LYS-1148</scope>
    <scope>IDENTIFICATION BY MASS SPECTROMETRY [LARGE SCALE ANALYSIS]</scope>
</reference>
<reference key="10">
    <citation type="journal article" date="2010" name="Sci. Signal.">
        <title>Quantitative phosphoproteomics reveals widespread full phosphorylation site occupancy during mitosis.</title>
        <authorList>
            <person name="Olsen J.V."/>
            <person name="Vermeulen M."/>
            <person name="Santamaria A."/>
            <person name="Kumar C."/>
            <person name="Miller M.L."/>
            <person name="Jensen L.J."/>
            <person name="Gnad F."/>
            <person name="Cox J."/>
            <person name="Jensen T.S."/>
            <person name="Nigg E.A."/>
            <person name="Brunak S."/>
            <person name="Mann M."/>
        </authorList>
    </citation>
    <scope>PHOSPHORYLATION [LARGE SCALE ANALYSIS] AT SER-13 AND SER-584</scope>
    <scope>IDENTIFICATION BY MASS SPECTROMETRY [LARGE SCALE ANALYSIS]</scope>
    <source>
        <tissue>Cervix carcinoma</tissue>
    </source>
</reference>
<reference key="11">
    <citation type="journal article" date="2011" name="Sci. Signal.">
        <title>System-wide temporal characterization of the proteome and phosphoproteome of human embryonic stem cell differentiation.</title>
        <authorList>
            <person name="Rigbolt K.T."/>
            <person name="Prokhorova T.A."/>
            <person name="Akimov V."/>
            <person name="Henningsen J."/>
            <person name="Johansen P.T."/>
            <person name="Kratchmarova I."/>
            <person name="Kassem M."/>
            <person name="Mann M."/>
            <person name="Olsen J.V."/>
            <person name="Blagoev B."/>
        </authorList>
    </citation>
    <scope>PHOSPHORYLATION [LARGE SCALE ANALYSIS] AT SER-13 AND SER-584</scope>
    <scope>IDENTIFICATION BY MASS SPECTROMETRY [LARGE SCALE ANALYSIS]</scope>
</reference>
<reference key="12">
    <citation type="journal article" date="2013" name="J. Proteome Res.">
        <title>Toward a comprehensive characterization of a human cancer cell phosphoproteome.</title>
        <authorList>
            <person name="Zhou H."/>
            <person name="Di Palma S."/>
            <person name="Preisinger C."/>
            <person name="Peng M."/>
            <person name="Polat A.N."/>
            <person name="Heck A.J."/>
            <person name="Mohammed S."/>
        </authorList>
    </citation>
    <scope>PHOSPHORYLATION [LARGE SCALE ANALYSIS] AT SER-13; THR-243; SER-311; SER-584 AND SER-1123</scope>
    <scope>IDENTIFICATION BY MASS SPECTROMETRY [LARGE SCALE ANALYSIS]</scope>
    <source>
        <tissue>Cervix carcinoma</tissue>
        <tissue>Erythroleukemia</tissue>
    </source>
</reference>
<reference key="13">
    <citation type="journal article" date="2014" name="J. Proteomics">
        <title>An enzyme assisted RP-RPLC approach for in-depth analysis of human liver phosphoproteome.</title>
        <authorList>
            <person name="Bian Y."/>
            <person name="Song C."/>
            <person name="Cheng K."/>
            <person name="Dong M."/>
            <person name="Wang F."/>
            <person name="Huang J."/>
            <person name="Sun D."/>
            <person name="Wang L."/>
            <person name="Ye M."/>
            <person name="Zou H."/>
        </authorList>
    </citation>
    <scope>PHOSPHORYLATION [LARGE SCALE ANALYSIS] AT SER-250 AND THR-252</scope>
    <scope>IDENTIFICATION BY MASS SPECTROMETRY [LARGE SCALE ANALYSIS]</scope>
    <source>
        <tissue>Liver</tissue>
    </source>
</reference>
<reference key="14">
    <citation type="journal article" date="2017" name="Nat. Struct. Mol. Biol.">
        <title>Site-specific mapping of the human SUMO proteome reveals co-modification with phosphorylation.</title>
        <authorList>
            <person name="Hendriks I.A."/>
            <person name="Lyon D."/>
            <person name="Young C."/>
            <person name="Jensen L.J."/>
            <person name="Vertegaal A.C."/>
            <person name="Nielsen M.L."/>
        </authorList>
    </citation>
    <scope>SUMOYLATION [LARGE SCALE ANALYSIS] AT LYS-272</scope>
    <scope>IDENTIFICATION BY MASS SPECTROMETRY [LARGE SCALE ANALYSIS]</scope>
</reference>
<dbReference type="EMBL" id="AC009220">
    <property type="status" value="NOT_ANNOTATED_CDS"/>
    <property type="molecule type" value="Genomic_DNA"/>
</dbReference>
<dbReference type="EMBL" id="CH236950">
    <property type="protein sequence ID" value="EAL24038.1"/>
    <property type="status" value="ALT_SEQ"/>
    <property type="molecule type" value="Genomic_DNA"/>
</dbReference>
<dbReference type="EMBL" id="AK098644">
    <property type="protein sequence ID" value="BAC05362.1"/>
    <property type="status" value="ALT_INIT"/>
    <property type="molecule type" value="mRNA"/>
</dbReference>
<dbReference type="EMBL" id="AK125956">
    <property type="protein sequence ID" value="BAC86361.1"/>
    <property type="molecule type" value="mRNA"/>
</dbReference>
<dbReference type="EMBL" id="BC065034">
    <property type="protein sequence ID" value="AAH65034.1"/>
    <property type="molecule type" value="mRNA"/>
</dbReference>
<dbReference type="EMBL" id="BC108249">
    <property type="protein sequence ID" value="AAI08250.1"/>
    <property type="molecule type" value="mRNA"/>
</dbReference>
<dbReference type="EMBL" id="AB107352">
    <property type="protein sequence ID" value="BAC67657.1"/>
    <property type="molecule type" value="mRNA"/>
</dbReference>
<dbReference type="CCDS" id="CCDS43655.2">
    <molecule id="Q6ZU65-1"/>
</dbReference>
<dbReference type="RefSeq" id="NP_775840.3">
    <molecule id="Q6ZU65-1"/>
    <property type="nucleotide sequence ID" value="NM_173569.3"/>
</dbReference>
<dbReference type="BioGRID" id="129009">
    <property type="interactions" value="88"/>
</dbReference>
<dbReference type="DIP" id="DIP-47312N"/>
<dbReference type="FunCoup" id="Q6ZU65">
    <property type="interactions" value="2516"/>
</dbReference>
<dbReference type="IntAct" id="Q6ZU65">
    <property type="interactions" value="71"/>
</dbReference>
<dbReference type="MINT" id="Q6ZU65"/>
<dbReference type="STRING" id="9606.ENSP00000418648"/>
<dbReference type="GlyCosmos" id="Q6ZU65">
    <property type="glycosylation" value="7 sites, 1 glycan"/>
</dbReference>
<dbReference type="GlyGen" id="Q6ZU65">
    <property type="glycosylation" value="14 sites, 1 O-linked glycan (14 sites)"/>
</dbReference>
<dbReference type="iPTMnet" id="Q6ZU65"/>
<dbReference type="PhosphoSitePlus" id="Q6ZU65"/>
<dbReference type="BioMuta" id="UBN2"/>
<dbReference type="DMDM" id="156630841"/>
<dbReference type="jPOST" id="Q6ZU65"/>
<dbReference type="MassIVE" id="Q6ZU65"/>
<dbReference type="PaxDb" id="9606-ENSP00000418648"/>
<dbReference type="PeptideAtlas" id="Q6ZU65"/>
<dbReference type="ProteomicsDB" id="68313">
    <molecule id="Q6ZU65-1"/>
</dbReference>
<dbReference type="ProteomicsDB" id="68314">
    <molecule id="Q6ZU65-2"/>
</dbReference>
<dbReference type="Pumba" id="Q6ZU65"/>
<dbReference type="Antibodypedia" id="9881">
    <property type="antibodies" value="90 antibodies from 21 providers"/>
</dbReference>
<dbReference type="DNASU" id="254048"/>
<dbReference type="Ensembl" id="ENST00000473989.8">
    <molecule id="Q6ZU65-1"/>
    <property type="protein sequence ID" value="ENSP00000418648.2"/>
    <property type="gene ID" value="ENSG00000157741.15"/>
</dbReference>
<dbReference type="GeneID" id="254048"/>
<dbReference type="KEGG" id="hsa:254048"/>
<dbReference type="MANE-Select" id="ENST00000473989.8">
    <property type="protein sequence ID" value="ENSP00000418648.2"/>
    <property type="RefSeq nucleotide sequence ID" value="NM_173569.4"/>
    <property type="RefSeq protein sequence ID" value="NP_775840.3"/>
</dbReference>
<dbReference type="UCSC" id="uc011kqr.2">
    <molecule id="Q6ZU65-1"/>
    <property type="organism name" value="human"/>
</dbReference>
<dbReference type="AGR" id="HGNC:21931"/>
<dbReference type="CTD" id="254048"/>
<dbReference type="DisGeNET" id="254048"/>
<dbReference type="GeneCards" id="UBN2"/>
<dbReference type="HGNC" id="HGNC:21931">
    <property type="gene designation" value="UBN2"/>
</dbReference>
<dbReference type="HPA" id="ENSG00000157741">
    <property type="expression patterns" value="Low tissue specificity"/>
</dbReference>
<dbReference type="MIM" id="613841">
    <property type="type" value="gene"/>
</dbReference>
<dbReference type="neXtProt" id="NX_Q6ZU65"/>
<dbReference type="OpenTargets" id="ENSG00000157741"/>
<dbReference type="PharmGKB" id="PA164727415"/>
<dbReference type="VEuPathDB" id="HostDB:ENSG00000157741"/>
<dbReference type="eggNOG" id="KOG4786">
    <property type="taxonomic scope" value="Eukaryota"/>
</dbReference>
<dbReference type="GeneTree" id="ENSGT00940000155858"/>
<dbReference type="HOGENOM" id="CLU_007400_1_0_1"/>
<dbReference type="InParanoid" id="Q6ZU65"/>
<dbReference type="OMA" id="PKVKKVM"/>
<dbReference type="OrthoDB" id="68076at2759"/>
<dbReference type="PAN-GO" id="Q6ZU65">
    <property type="GO annotations" value="2 GO annotations based on evolutionary models"/>
</dbReference>
<dbReference type="PhylomeDB" id="Q6ZU65"/>
<dbReference type="TreeFam" id="TF326088"/>
<dbReference type="PathwayCommons" id="Q6ZU65"/>
<dbReference type="SignaLink" id="Q6ZU65"/>
<dbReference type="SIGNOR" id="Q6ZU65"/>
<dbReference type="BioGRID-ORCS" id="254048">
    <property type="hits" value="13 hits in 1155 CRISPR screens"/>
</dbReference>
<dbReference type="ChiTaRS" id="UBN2">
    <property type="organism name" value="human"/>
</dbReference>
<dbReference type="GenomeRNAi" id="254048"/>
<dbReference type="Pharos" id="Q6ZU65">
    <property type="development level" value="Tbio"/>
</dbReference>
<dbReference type="PRO" id="PR:Q6ZU65"/>
<dbReference type="Proteomes" id="UP000005640">
    <property type="component" value="Chromosome 7"/>
</dbReference>
<dbReference type="RNAct" id="Q6ZU65">
    <property type="molecule type" value="protein"/>
</dbReference>
<dbReference type="Bgee" id="ENSG00000157741">
    <property type="expression patterns" value="Expressed in upper arm skin and 193 other cell types or tissues"/>
</dbReference>
<dbReference type="ExpressionAtlas" id="Q6ZU65">
    <property type="expression patterns" value="baseline and differential"/>
</dbReference>
<dbReference type="GO" id="GO:0005615">
    <property type="term" value="C:extracellular space"/>
    <property type="evidence" value="ECO:0007005"/>
    <property type="project" value="UniProtKB"/>
</dbReference>
<dbReference type="GO" id="GO:0005654">
    <property type="term" value="C:nucleoplasm"/>
    <property type="evidence" value="ECO:0000314"/>
    <property type="project" value="HPA"/>
</dbReference>
<dbReference type="GO" id="GO:0005634">
    <property type="term" value="C:nucleus"/>
    <property type="evidence" value="ECO:0000318"/>
    <property type="project" value="GO_Central"/>
</dbReference>
<dbReference type="GO" id="GO:0006325">
    <property type="term" value="P:chromatin organization"/>
    <property type="evidence" value="ECO:0000318"/>
    <property type="project" value="GO_Central"/>
</dbReference>
<dbReference type="InterPro" id="IPR014840">
    <property type="entry name" value="HRD"/>
</dbReference>
<dbReference type="InterPro" id="IPR026947">
    <property type="entry name" value="UBN_middle_dom"/>
</dbReference>
<dbReference type="PANTHER" id="PTHR21669">
    <property type="entry name" value="CAPZ-INTERACTING PROTEIN AND RELATED PROTEINS"/>
    <property type="match status" value="1"/>
</dbReference>
<dbReference type="PANTHER" id="PTHR21669:SF10">
    <property type="entry name" value="UBINUCLEIN-2"/>
    <property type="match status" value="1"/>
</dbReference>
<dbReference type="Pfam" id="PF08729">
    <property type="entry name" value="HUN"/>
    <property type="match status" value="1"/>
</dbReference>
<dbReference type="Pfam" id="PF14075">
    <property type="entry name" value="UBN_AB"/>
    <property type="match status" value="1"/>
</dbReference>
<gene>
    <name type="primary">UBN2</name>
    <name type="synonym">KIAA2030</name>
</gene>
<accession>Q6ZU65</accession>
<accession>A4D1S2</accession>
<accession>Q2YDY4</accession>
<accession>Q6P1K0</accession>
<accession>Q86XN9</accession>
<accession>Q8N7D1</accession>
<sequence length="1347" mass="146089">MAEPRRVAFISLSPVRRREAEYPGPEREPEYPREPPRLEPQPYREPARAEPPAPREPAPRSDAQPPSREKPLPQREVSRAEPPMSLQREPPRPEPPPPFPPLPLQPPPPRESASRAEQPPRPPRETVRLELVLKDPTDESCVEFSYPELLLCGEQRKKLIHTEDPFNDEHQERQEVEMLAKKFEMKYGGKPRKHRKDRLQDLIDIGFGYDETDPFIDNSEAYDELVPASLTTKYGGFYINTGTLQFRQASDTEEDDITDNQKHKPPKVPKIKEDDIEMKKRKRKEEGEKEKKPRKKVPKQLGVVALNSHKSEKKKKRYKDSLSLAAMIRKFQKEKDALKKESNPKVPVTLSTPSLNKPPCAAAALGNDVPDLNLSSGDPDLPIFVSTNEHELFQEAENALEMLDDFDFDRLLDAASDGSPLSESGGENGTTTQPTYTSQVMPKVVPTLPEGLPVLLEKRIEDLRVAAKLFDEEGRKKFFTQDMNNILLDIELQLQELGPVIRSGVYSHLEAFVPCNKETLVKRLKKLHLNVQDDRLREPLQKLKLAVSNVMPEQLFKYQEDCQARSQAKCAKLQTDEEREKNGSEEDDDEKPGKRVIGPRKKFHWDDTIRTLLCNLVEIKLGCYELEPNKSQSAEDYLKSFMETEVKPLWPKGWMQARMLFKESRSVHNHLTSAPAKKKVIPAPKPKVKEVMVKTLPLHSFPTMLKECSPKKDQKTPTSLVASVSGPPTSSSTAAIAAASSSSAPAQETICLDDSLDEDLSFHSPSLDLVSEALAVINNGNKGPPVGSRISMPTTKPRPGLREEKLASIMSKLPLATPKKLDSTQTTHSSSLIAGHTGPVPKKPQDLAHTGISSGLIAGSSIQNPKVSLEPLPARLLQQGLQRSSQIHTSSSSQTHVSSSSQAQIAASSHALGTSEAQDASSLTQVTKVHQHSAVQQNYVSPLQATISKSQTNPVVKLSNNPQLSCSSSLIKTSDKPLMYRLPLSTPSPGNGSQGSHPLVSRTVPSTTTSSNYLAKAMVSQISTQGFKSPFSMAASPKLAASPKPATSPKPLPSPKPSASPKPSLSAKPSVSTKLISKSNPTPKPTVSPSSSSPNALVAQGSHSSTNSPVHKQPSGMNISRQSPTLNLLPSSRTSGLPPTKNLQAPSKLTNSSSTGTVGKNSLSGIAMNVPASRGSNLNSSGANRTSLSGGTGSGTQGATKPLSTPHRPSTASGSSVVTASVQSTAGASLLANASPLTLMTSPLSVTNQNVTPFGMLGGLVPVTMPFQFPLEIFGFGTDTAGVTTTSGSTSAAFHHSLTQNLLKGLQPGGAQHAATLSHSPLPAHLQQAFHDGGQSKGDTKLPRKSQ</sequence>
<organism>
    <name type="scientific">Homo sapiens</name>
    <name type="common">Human</name>
    <dbReference type="NCBI Taxonomy" id="9606"/>
    <lineage>
        <taxon>Eukaryota</taxon>
        <taxon>Metazoa</taxon>
        <taxon>Chordata</taxon>
        <taxon>Craniata</taxon>
        <taxon>Vertebrata</taxon>
        <taxon>Euteleostomi</taxon>
        <taxon>Mammalia</taxon>
        <taxon>Eutheria</taxon>
        <taxon>Euarchontoglires</taxon>
        <taxon>Primates</taxon>
        <taxon>Haplorrhini</taxon>
        <taxon>Catarrhini</taxon>
        <taxon>Hominidae</taxon>
        <taxon>Homo</taxon>
    </lineage>
</organism>
<comment type="interaction">
    <interactant intactId="EBI-9661773">
        <id>Q6ZU65</id>
    </interactant>
    <interactant intactId="EBI-372342">
        <id>P54198</id>
        <label>HIRA</label>
    </interactant>
    <organismsDiffer>false</organismsDiffer>
    <experiments>2</experiments>
</comment>
<comment type="alternative products">
    <event type="alternative splicing"/>
    <isoform>
        <id>Q6ZU65-1</id>
        <name>1</name>
        <sequence type="displayed"/>
    </isoform>
    <isoform>
        <id>Q6ZU65-2</id>
        <name>2</name>
        <sequence type="described" ref="VSP_027021 VSP_027022"/>
    </isoform>
</comment>
<comment type="tissue specificity">
    <text evidence="3">Expressed in several cell lines tested, including primary and transformed cell lines.</text>
</comment>
<comment type="similarity">
    <text evidence="5">Belongs to the ubinuclein family.</text>
</comment>
<comment type="sequence caution" evidence="5">
    <conflict type="erroneous initiation">
        <sequence resource="EMBL-CDS" id="BAC05362"/>
    </conflict>
    <text>Truncated N-terminus.</text>
</comment>
<comment type="sequence caution" evidence="5">
    <conflict type="erroneous gene model prediction">
        <sequence resource="EMBL-CDS" id="EAL24038"/>
    </conflict>
</comment>
<evidence type="ECO:0000250" key="1">
    <source>
        <dbReference type="UniProtKB" id="Q80WC1"/>
    </source>
</evidence>
<evidence type="ECO:0000256" key="2">
    <source>
        <dbReference type="SAM" id="MobiDB-lite"/>
    </source>
</evidence>
<evidence type="ECO:0000269" key="3">
    <source>
    </source>
</evidence>
<evidence type="ECO:0000303" key="4">
    <source>
    </source>
</evidence>
<evidence type="ECO:0000305" key="5"/>
<evidence type="ECO:0007744" key="6">
    <source>
    </source>
</evidence>
<evidence type="ECO:0007744" key="7">
    <source>
    </source>
</evidence>
<evidence type="ECO:0007744" key="8">
    <source>
    </source>
</evidence>
<evidence type="ECO:0007744" key="9">
    <source>
    </source>
</evidence>
<evidence type="ECO:0007744" key="10">
    <source>
    </source>
</evidence>
<evidence type="ECO:0007744" key="11">
    <source>
    </source>
</evidence>
<evidence type="ECO:0007744" key="12">
    <source>
    </source>
</evidence>
<proteinExistence type="evidence at protein level"/>
<keyword id="KW-0007">Acetylation</keyword>
<keyword id="KW-0025">Alternative splicing</keyword>
<keyword id="KW-1017">Isopeptide bond</keyword>
<keyword id="KW-0597">Phosphoprotein</keyword>
<keyword id="KW-1267">Proteomics identification</keyword>
<keyword id="KW-1185">Reference proteome</keyword>
<keyword id="KW-0832">Ubl conjugation</keyword>
<protein>
    <recommendedName>
        <fullName>Ubinuclein-2</fullName>
    </recommendedName>
</protein>
<feature type="chain" id="PRO_0000295725" description="Ubinuclein-2">
    <location>
        <begin position="1"/>
        <end position="1347"/>
    </location>
</feature>
<feature type="region of interest" description="Disordered" evidence="2">
    <location>
        <begin position="1"/>
        <end position="134"/>
    </location>
</feature>
<feature type="region of interest" description="Disordered" evidence="2">
    <location>
        <begin position="250"/>
        <end position="301"/>
    </location>
</feature>
<feature type="region of interest" description="Disordered" evidence="2">
    <location>
        <begin position="573"/>
        <end position="597"/>
    </location>
</feature>
<feature type="region of interest" description="Disordered" evidence="2">
    <location>
        <begin position="707"/>
        <end position="740"/>
    </location>
</feature>
<feature type="region of interest" description="Disordered" evidence="2">
    <location>
        <begin position="815"/>
        <end position="849"/>
    </location>
</feature>
<feature type="region of interest" description="Disordered" evidence="2">
    <location>
        <begin position="880"/>
        <end position="913"/>
    </location>
</feature>
<feature type="region of interest" description="Disordered" evidence="2">
    <location>
        <begin position="981"/>
        <end position="1006"/>
    </location>
</feature>
<feature type="region of interest" description="Disordered" evidence="2">
    <location>
        <begin position="1035"/>
        <end position="1218"/>
    </location>
</feature>
<feature type="compositionally biased region" description="Basic and acidic residues" evidence="2">
    <location>
        <begin position="16"/>
        <end position="37"/>
    </location>
</feature>
<feature type="compositionally biased region" description="Basic and acidic residues" evidence="2">
    <location>
        <begin position="67"/>
        <end position="79"/>
    </location>
</feature>
<feature type="compositionally biased region" description="Pro residues" evidence="2">
    <location>
        <begin position="93"/>
        <end position="110"/>
    </location>
</feature>
<feature type="compositionally biased region" description="Basic and acidic residues" evidence="2">
    <location>
        <begin position="122"/>
        <end position="134"/>
    </location>
</feature>
<feature type="compositionally biased region" description="Basic and acidic residues" evidence="2">
    <location>
        <begin position="574"/>
        <end position="584"/>
    </location>
</feature>
<feature type="compositionally biased region" description="Low complexity" evidence="2">
    <location>
        <begin position="721"/>
        <end position="740"/>
    </location>
</feature>
<feature type="compositionally biased region" description="Polar residues" evidence="2">
    <location>
        <begin position="823"/>
        <end position="832"/>
    </location>
</feature>
<feature type="compositionally biased region" description="Low complexity" evidence="2">
    <location>
        <begin position="880"/>
        <end position="911"/>
    </location>
</feature>
<feature type="compositionally biased region" description="Polar residues" evidence="2">
    <location>
        <begin position="985"/>
        <end position="996"/>
    </location>
</feature>
<feature type="compositionally biased region" description="Low complexity" evidence="2">
    <location>
        <begin position="1035"/>
        <end position="1045"/>
    </location>
</feature>
<feature type="compositionally biased region" description="Pro residues" evidence="2">
    <location>
        <begin position="1046"/>
        <end position="1060"/>
    </location>
</feature>
<feature type="compositionally biased region" description="Low complexity" evidence="2">
    <location>
        <begin position="1061"/>
        <end position="1070"/>
    </location>
</feature>
<feature type="compositionally biased region" description="Low complexity" evidence="2">
    <location>
        <begin position="1077"/>
        <end position="1095"/>
    </location>
</feature>
<feature type="compositionally biased region" description="Polar residues" evidence="2">
    <location>
        <begin position="1101"/>
        <end position="1164"/>
    </location>
</feature>
<feature type="compositionally biased region" description="Polar residues" evidence="2">
    <location>
        <begin position="1174"/>
        <end position="1185"/>
    </location>
</feature>
<feature type="modified residue" description="Phosphoserine" evidence="6 8 9 10">
    <location>
        <position position="13"/>
    </location>
</feature>
<feature type="modified residue" description="Phosphothreonine" evidence="10">
    <location>
        <position position="243"/>
    </location>
</feature>
<feature type="modified residue" description="Phosphoserine" evidence="11">
    <location>
        <position position="250"/>
    </location>
</feature>
<feature type="modified residue" description="Phosphothreonine" evidence="11">
    <location>
        <position position="252"/>
    </location>
</feature>
<feature type="modified residue" description="Phosphoserine" evidence="10">
    <location>
        <position position="311"/>
    </location>
</feature>
<feature type="modified residue" description="Phosphoserine" evidence="1">
    <location>
        <position position="416"/>
    </location>
</feature>
<feature type="modified residue" description="Phosphoserine" evidence="1">
    <location>
        <position position="419"/>
    </location>
</feature>
<feature type="modified residue" description="Phosphoserine" evidence="1">
    <location>
        <position position="422"/>
    </location>
</feature>
<feature type="modified residue" description="Phosphoserine" evidence="8 9 10">
    <location>
        <position position="584"/>
    </location>
</feature>
<feature type="modified residue" description="N6-acetyllysine" evidence="1">
    <location>
        <position position="1068"/>
    </location>
</feature>
<feature type="modified residue" description="Phosphoserine" evidence="10">
    <location>
        <position position="1123"/>
    </location>
</feature>
<feature type="modified residue" description="N6-acetyllysine" evidence="7">
    <location>
        <position position="1148"/>
    </location>
</feature>
<feature type="cross-link" description="Glycyl lysine isopeptide (Lys-Gly) (interchain with G-Cter in SUMO2)" evidence="12">
    <location>
        <position position="272"/>
    </location>
</feature>
<feature type="splice variant" id="VSP_027021" description="In isoform 2." evidence="4">
    <original>LSNNPQLSCSSSL</original>
    <variation>GPCLRDVSEQFGP</variation>
    <location>
        <begin position="958"/>
        <end position="970"/>
    </location>
</feature>
<feature type="splice variant" id="VSP_027022" description="In isoform 2." evidence="4">
    <location>
        <begin position="971"/>
        <end position="1347"/>
    </location>
</feature>
<feature type="sequence variant" id="VAR_033347" description="In dbSNP:rs17160850.">
    <original>P</original>
    <variation>A</variation>
    <location>
        <position position="1308"/>
    </location>
</feature>